<proteinExistence type="inferred from homology"/>
<protein>
    <recommendedName>
        <fullName evidence="1">Tyrosine recombinase XerC</fullName>
    </recommendedName>
</protein>
<comment type="function">
    <text evidence="1">Site-specific tyrosine recombinase, which acts by catalyzing the cutting and rejoining of the recombining DNA molecules. The XerC-XerD complex is essential to convert dimers of the bacterial chromosome into monomers to permit their segregation at cell division. It also contributes to the segregational stability of plasmids.</text>
</comment>
<comment type="subunit">
    <text evidence="1">Forms a cyclic heterotetrameric complex composed of two molecules of XerC and two molecules of XerD.</text>
</comment>
<comment type="subcellular location">
    <subcellularLocation>
        <location evidence="1">Cytoplasm</location>
    </subcellularLocation>
</comment>
<comment type="similarity">
    <text evidence="1">Belongs to the 'phage' integrase family. XerC subfamily.</text>
</comment>
<organism>
    <name type="scientific">Lacticaseibacillus casei (strain BL23)</name>
    <name type="common">Lactobacillus casei</name>
    <dbReference type="NCBI Taxonomy" id="543734"/>
    <lineage>
        <taxon>Bacteria</taxon>
        <taxon>Bacillati</taxon>
        <taxon>Bacillota</taxon>
        <taxon>Bacilli</taxon>
        <taxon>Lactobacillales</taxon>
        <taxon>Lactobacillaceae</taxon>
        <taxon>Lacticaseibacillus</taxon>
    </lineage>
</organism>
<keyword id="KW-0131">Cell cycle</keyword>
<keyword id="KW-0132">Cell division</keyword>
<keyword id="KW-0159">Chromosome partition</keyword>
<keyword id="KW-0963">Cytoplasm</keyword>
<keyword id="KW-0229">DNA integration</keyword>
<keyword id="KW-0233">DNA recombination</keyword>
<keyword id="KW-0238">DNA-binding</keyword>
<dbReference type="EMBL" id="FM177140">
    <property type="protein sequence ID" value="CAQ66708.1"/>
    <property type="molecule type" value="Genomic_DNA"/>
</dbReference>
<dbReference type="SMR" id="B3WEA7"/>
<dbReference type="KEGG" id="lcb:LCABL_16270"/>
<dbReference type="HOGENOM" id="CLU_027562_9_0_9"/>
<dbReference type="GO" id="GO:0005737">
    <property type="term" value="C:cytoplasm"/>
    <property type="evidence" value="ECO:0007669"/>
    <property type="project" value="UniProtKB-SubCell"/>
</dbReference>
<dbReference type="GO" id="GO:0003677">
    <property type="term" value="F:DNA binding"/>
    <property type="evidence" value="ECO:0007669"/>
    <property type="project" value="UniProtKB-KW"/>
</dbReference>
<dbReference type="GO" id="GO:0009037">
    <property type="term" value="F:tyrosine-based site-specific recombinase activity"/>
    <property type="evidence" value="ECO:0007669"/>
    <property type="project" value="UniProtKB-UniRule"/>
</dbReference>
<dbReference type="GO" id="GO:0051301">
    <property type="term" value="P:cell division"/>
    <property type="evidence" value="ECO:0007669"/>
    <property type="project" value="UniProtKB-KW"/>
</dbReference>
<dbReference type="GO" id="GO:0007059">
    <property type="term" value="P:chromosome segregation"/>
    <property type="evidence" value="ECO:0007669"/>
    <property type="project" value="UniProtKB-UniRule"/>
</dbReference>
<dbReference type="GO" id="GO:0006313">
    <property type="term" value="P:DNA transposition"/>
    <property type="evidence" value="ECO:0007669"/>
    <property type="project" value="UniProtKB-UniRule"/>
</dbReference>
<dbReference type="CDD" id="cd00798">
    <property type="entry name" value="INT_XerDC_C"/>
    <property type="match status" value="1"/>
</dbReference>
<dbReference type="Gene3D" id="1.10.150.130">
    <property type="match status" value="1"/>
</dbReference>
<dbReference type="Gene3D" id="1.10.443.10">
    <property type="entry name" value="Intergrase catalytic core"/>
    <property type="match status" value="1"/>
</dbReference>
<dbReference type="HAMAP" id="MF_01808">
    <property type="entry name" value="Recomb_XerC_XerD"/>
    <property type="match status" value="1"/>
</dbReference>
<dbReference type="InterPro" id="IPR044068">
    <property type="entry name" value="CB"/>
</dbReference>
<dbReference type="InterPro" id="IPR011010">
    <property type="entry name" value="DNA_brk_join_enz"/>
</dbReference>
<dbReference type="InterPro" id="IPR013762">
    <property type="entry name" value="Integrase-like_cat_sf"/>
</dbReference>
<dbReference type="InterPro" id="IPR002104">
    <property type="entry name" value="Integrase_catalytic"/>
</dbReference>
<dbReference type="InterPro" id="IPR010998">
    <property type="entry name" value="Integrase_recombinase_N"/>
</dbReference>
<dbReference type="InterPro" id="IPR004107">
    <property type="entry name" value="Integrase_SAM-like_N"/>
</dbReference>
<dbReference type="InterPro" id="IPR011931">
    <property type="entry name" value="Recomb_XerC"/>
</dbReference>
<dbReference type="InterPro" id="IPR023009">
    <property type="entry name" value="Tyrosine_recombinase_XerC/XerD"/>
</dbReference>
<dbReference type="InterPro" id="IPR050090">
    <property type="entry name" value="Tyrosine_recombinase_XerCD"/>
</dbReference>
<dbReference type="NCBIfam" id="NF001399">
    <property type="entry name" value="PRK00283.1"/>
    <property type="match status" value="1"/>
</dbReference>
<dbReference type="NCBIfam" id="NF040815">
    <property type="entry name" value="recomb_XerA_Arch"/>
    <property type="match status" value="1"/>
</dbReference>
<dbReference type="NCBIfam" id="TIGR02224">
    <property type="entry name" value="recomb_XerC"/>
    <property type="match status" value="1"/>
</dbReference>
<dbReference type="PANTHER" id="PTHR30349">
    <property type="entry name" value="PHAGE INTEGRASE-RELATED"/>
    <property type="match status" value="1"/>
</dbReference>
<dbReference type="PANTHER" id="PTHR30349:SF77">
    <property type="entry name" value="TYROSINE RECOMBINASE XERC"/>
    <property type="match status" value="1"/>
</dbReference>
<dbReference type="Pfam" id="PF02899">
    <property type="entry name" value="Phage_int_SAM_1"/>
    <property type="match status" value="1"/>
</dbReference>
<dbReference type="Pfam" id="PF00589">
    <property type="entry name" value="Phage_integrase"/>
    <property type="match status" value="1"/>
</dbReference>
<dbReference type="SUPFAM" id="SSF56349">
    <property type="entry name" value="DNA breaking-rejoining enzymes"/>
    <property type="match status" value="1"/>
</dbReference>
<dbReference type="PROSITE" id="PS51900">
    <property type="entry name" value="CB"/>
    <property type="match status" value="1"/>
</dbReference>
<dbReference type="PROSITE" id="PS51898">
    <property type="entry name" value="TYR_RECOMBINASE"/>
    <property type="match status" value="1"/>
</dbReference>
<gene>
    <name evidence="1" type="primary">xerC</name>
    <name type="ordered locus">LCABL_16270</name>
</gene>
<name>XERC_LACCB</name>
<reference key="1">
    <citation type="submission" date="2008-06" db="EMBL/GenBank/DDBJ databases">
        <title>Lactobacillus casei BL23 complete genome sequence.</title>
        <authorList>
            <person name="Maze A."/>
            <person name="Boel G."/>
            <person name="Bourand A."/>
            <person name="Loux V."/>
            <person name="Gibrat J.F."/>
            <person name="Zuniga M."/>
            <person name="Hartke A."/>
            <person name="Deutscher J."/>
        </authorList>
    </citation>
    <scope>NUCLEOTIDE SEQUENCE [LARGE SCALE GENOMIC DNA]</scope>
    <source>
        <strain>BL23</strain>
    </source>
</reference>
<evidence type="ECO:0000255" key="1">
    <source>
        <dbReference type="HAMAP-Rule" id="MF_01808"/>
    </source>
</evidence>
<evidence type="ECO:0000255" key="2">
    <source>
        <dbReference type="PROSITE-ProRule" id="PRU01246"/>
    </source>
</evidence>
<evidence type="ECO:0000255" key="3">
    <source>
        <dbReference type="PROSITE-ProRule" id="PRU01248"/>
    </source>
</evidence>
<accession>B3WEA7</accession>
<sequence>MKPIAAFQEYLEVERQYSPETVTAYLSDLQEFQAFLKANGGFTDFRHVDDLDVQTYLTDLNKQDLARTSIARKISSLRSFYRYLTRIDVVKRNPFELVELKKQHHHLPQFFYEAEIQELFKTVAGKTPLDQRNRALLEVLYGTGIRVSECAKLTLNQVDFNTALLLIHGKGNKDRYVPFGQYAQQALRTYLKDGRQVLMAKSQAQHRYVFVNQYGRPITSRGIEYILDQLIKQTTLTANIHPHMLRHSFATHMLDHGADLRTVQELLGHASLSTTQIYTHVTMAHLKNEYMKYYPKHN</sequence>
<feature type="chain" id="PRO_1000187601" description="Tyrosine recombinase XerC">
    <location>
        <begin position="1"/>
        <end position="298"/>
    </location>
</feature>
<feature type="domain" description="Core-binding (CB)" evidence="3">
    <location>
        <begin position="1"/>
        <end position="85"/>
    </location>
</feature>
<feature type="domain" description="Tyr recombinase" evidence="2">
    <location>
        <begin position="106"/>
        <end position="291"/>
    </location>
</feature>
<feature type="active site" evidence="1">
    <location>
        <position position="146"/>
    </location>
</feature>
<feature type="active site" evidence="1">
    <location>
        <position position="170"/>
    </location>
</feature>
<feature type="active site" evidence="1">
    <location>
        <position position="243"/>
    </location>
</feature>
<feature type="active site" evidence="1">
    <location>
        <position position="246"/>
    </location>
</feature>
<feature type="active site" evidence="1">
    <location>
        <position position="269"/>
    </location>
</feature>
<feature type="active site" description="O-(3'-phospho-DNA)-tyrosine intermediate" evidence="1">
    <location>
        <position position="278"/>
    </location>
</feature>